<reference key="1">
    <citation type="journal article" date="2009" name="Environ. Microbiol.">
        <title>Contribution of mobile genetic elements to Desulfovibrio vulgaris genome plasticity.</title>
        <authorList>
            <person name="Walker C.B."/>
            <person name="Stolyar S."/>
            <person name="Chivian D."/>
            <person name="Pinel N."/>
            <person name="Gabster J.A."/>
            <person name="Dehal P.S."/>
            <person name="He Z."/>
            <person name="Yang Z.K."/>
            <person name="Yen H.C."/>
            <person name="Zhou J."/>
            <person name="Wall J.D."/>
            <person name="Hazen T.C."/>
            <person name="Arkin A.P."/>
            <person name="Stahl D.A."/>
        </authorList>
    </citation>
    <scope>NUCLEOTIDE SEQUENCE [LARGE SCALE GENOMIC DNA]</scope>
    <source>
        <strain>DP4</strain>
    </source>
</reference>
<evidence type="ECO:0000255" key="1">
    <source>
        <dbReference type="HAMAP-Rule" id="MF_01642"/>
    </source>
</evidence>
<comment type="function">
    <text evidence="1">Involved in the synthesis of meso-diaminopimelate (m-DAP or DL-DAP), required for both lysine and peptidoglycan biosynthesis. Catalyzes the direct conversion of tetrahydrodipicolinate to LL-diaminopimelate.</text>
</comment>
<comment type="catalytic activity">
    <reaction evidence="1">
        <text>(2S,6S)-2,6-diaminopimelate + 2-oxoglutarate = (S)-2,3,4,5-tetrahydrodipicolinate + L-glutamate + H2O + H(+)</text>
        <dbReference type="Rhea" id="RHEA:23988"/>
        <dbReference type="ChEBI" id="CHEBI:15377"/>
        <dbReference type="ChEBI" id="CHEBI:15378"/>
        <dbReference type="ChEBI" id="CHEBI:16810"/>
        <dbReference type="ChEBI" id="CHEBI:16845"/>
        <dbReference type="ChEBI" id="CHEBI:29985"/>
        <dbReference type="ChEBI" id="CHEBI:57609"/>
        <dbReference type="EC" id="2.6.1.83"/>
    </reaction>
</comment>
<comment type="cofactor">
    <cofactor evidence="1">
        <name>pyridoxal 5'-phosphate</name>
        <dbReference type="ChEBI" id="CHEBI:597326"/>
    </cofactor>
</comment>
<comment type="pathway">
    <text evidence="1">Amino-acid biosynthesis; L-lysine biosynthesis via DAP pathway; LL-2,6-diaminopimelate from (S)-tetrahydrodipicolinate (aminotransferase route): step 1/1.</text>
</comment>
<comment type="subunit">
    <text evidence="1">Homodimer.</text>
</comment>
<comment type="similarity">
    <text evidence="1">Belongs to the class-I pyridoxal-phosphate-dependent aminotransferase family. LL-diaminopimelate aminotransferase subfamily.</text>
</comment>
<dbReference type="EC" id="2.6.1.83" evidence="1"/>
<dbReference type="EMBL" id="CP000527">
    <property type="protein sequence ID" value="ABM28449.1"/>
    <property type="molecule type" value="Genomic_DNA"/>
</dbReference>
<dbReference type="RefSeq" id="WP_011792250.1">
    <property type="nucleotide sequence ID" value="NC_008751.1"/>
</dbReference>
<dbReference type="SMR" id="A1VDD3"/>
<dbReference type="KEGG" id="dvl:Dvul_1431"/>
<dbReference type="HOGENOM" id="CLU_017584_4_5_7"/>
<dbReference type="UniPathway" id="UPA00034">
    <property type="reaction ID" value="UER00466"/>
</dbReference>
<dbReference type="Proteomes" id="UP000009173">
    <property type="component" value="Chromosome"/>
</dbReference>
<dbReference type="GO" id="GO:0010285">
    <property type="term" value="F:L,L-diaminopimelate aminotransferase activity"/>
    <property type="evidence" value="ECO:0007669"/>
    <property type="project" value="UniProtKB-EC"/>
</dbReference>
<dbReference type="GO" id="GO:0030170">
    <property type="term" value="F:pyridoxal phosphate binding"/>
    <property type="evidence" value="ECO:0007669"/>
    <property type="project" value="InterPro"/>
</dbReference>
<dbReference type="GO" id="GO:0009089">
    <property type="term" value="P:lysine biosynthetic process via diaminopimelate"/>
    <property type="evidence" value="ECO:0007669"/>
    <property type="project" value="UniProtKB-UniPathway"/>
</dbReference>
<dbReference type="CDD" id="cd00609">
    <property type="entry name" value="AAT_like"/>
    <property type="match status" value="1"/>
</dbReference>
<dbReference type="Gene3D" id="3.90.1150.10">
    <property type="entry name" value="Aspartate Aminotransferase, domain 1"/>
    <property type="match status" value="1"/>
</dbReference>
<dbReference type="Gene3D" id="3.40.640.10">
    <property type="entry name" value="Type I PLP-dependent aspartate aminotransferase-like (Major domain)"/>
    <property type="match status" value="1"/>
</dbReference>
<dbReference type="HAMAP" id="MF_01642">
    <property type="entry name" value="DapL_aminotrans_1"/>
    <property type="match status" value="1"/>
</dbReference>
<dbReference type="InterPro" id="IPR004839">
    <property type="entry name" value="Aminotransferase_I/II_large"/>
</dbReference>
<dbReference type="InterPro" id="IPR019881">
    <property type="entry name" value="DAP-NH2Trfase_DapL_Desulfo"/>
</dbReference>
<dbReference type="InterPro" id="IPR019942">
    <property type="entry name" value="DapL/ALD1"/>
</dbReference>
<dbReference type="InterPro" id="IPR050881">
    <property type="entry name" value="LL-DAP_aminotransferase"/>
</dbReference>
<dbReference type="InterPro" id="IPR004838">
    <property type="entry name" value="NHTrfase_class1_PyrdxlP-BS"/>
</dbReference>
<dbReference type="InterPro" id="IPR015424">
    <property type="entry name" value="PyrdxlP-dep_Trfase"/>
</dbReference>
<dbReference type="InterPro" id="IPR015421">
    <property type="entry name" value="PyrdxlP-dep_Trfase_major"/>
</dbReference>
<dbReference type="InterPro" id="IPR015422">
    <property type="entry name" value="PyrdxlP-dep_Trfase_small"/>
</dbReference>
<dbReference type="NCBIfam" id="TIGR03540">
    <property type="entry name" value="DapC_direct"/>
    <property type="match status" value="1"/>
</dbReference>
<dbReference type="NCBIfam" id="NF006756">
    <property type="entry name" value="PRK09276.1"/>
    <property type="match status" value="1"/>
</dbReference>
<dbReference type="PANTHER" id="PTHR42832">
    <property type="entry name" value="AMINO ACID AMINOTRANSFERASE"/>
    <property type="match status" value="1"/>
</dbReference>
<dbReference type="PANTHER" id="PTHR42832:SF3">
    <property type="entry name" value="L-GLUTAMINE--4-(METHYLSULFANYL)-2-OXOBUTANOATE AMINOTRANSFERASE"/>
    <property type="match status" value="1"/>
</dbReference>
<dbReference type="Pfam" id="PF00155">
    <property type="entry name" value="Aminotran_1_2"/>
    <property type="match status" value="1"/>
</dbReference>
<dbReference type="SUPFAM" id="SSF53383">
    <property type="entry name" value="PLP-dependent transferases"/>
    <property type="match status" value="1"/>
</dbReference>
<dbReference type="PROSITE" id="PS00105">
    <property type="entry name" value="AA_TRANSFER_CLASS_1"/>
    <property type="match status" value="1"/>
</dbReference>
<feature type="chain" id="PRO_0000342237" description="LL-diaminopimelate aminotransferase">
    <location>
        <begin position="1"/>
        <end position="388"/>
    </location>
</feature>
<feature type="binding site" evidence="1">
    <location>
        <position position="16"/>
    </location>
    <ligand>
        <name>substrate</name>
    </ligand>
</feature>
<feature type="binding site" evidence="1">
    <location>
        <position position="41"/>
    </location>
    <ligand>
        <name>substrate</name>
    </ligand>
</feature>
<feature type="binding site" evidence="1">
    <location>
        <position position="70"/>
    </location>
    <ligand>
        <name>pyridoxal 5'-phosphate</name>
        <dbReference type="ChEBI" id="CHEBI:597326"/>
    </ligand>
</feature>
<feature type="binding site" evidence="1">
    <location>
        <begin position="104"/>
        <end position="105"/>
    </location>
    <ligand>
        <name>pyridoxal 5'-phosphate</name>
        <dbReference type="ChEBI" id="CHEBI:597326"/>
    </ligand>
</feature>
<feature type="binding site" evidence="1">
    <location>
        <position position="105"/>
    </location>
    <ligand>
        <name>substrate</name>
    </ligand>
</feature>
<feature type="binding site" evidence="1">
    <location>
        <position position="129"/>
    </location>
    <ligand>
        <name>pyridoxal 5'-phosphate</name>
        <dbReference type="ChEBI" id="CHEBI:597326"/>
    </ligand>
</feature>
<feature type="binding site" evidence="1">
    <location>
        <position position="129"/>
    </location>
    <ligand>
        <name>substrate</name>
    </ligand>
</feature>
<feature type="binding site" evidence="1">
    <location>
        <position position="179"/>
    </location>
    <ligand>
        <name>pyridoxal 5'-phosphate</name>
        <dbReference type="ChEBI" id="CHEBI:597326"/>
    </ligand>
</feature>
<feature type="binding site" evidence="1">
    <location>
        <position position="179"/>
    </location>
    <ligand>
        <name>substrate</name>
    </ligand>
</feature>
<feature type="binding site" evidence="1">
    <location>
        <position position="210"/>
    </location>
    <ligand>
        <name>pyridoxal 5'-phosphate</name>
        <dbReference type="ChEBI" id="CHEBI:597326"/>
    </ligand>
</feature>
<feature type="binding site" evidence="1">
    <location>
        <begin position="239"/>
        <end position="241"/>
    </location>
    <ligand>
        <name>pyridoxal 5'-phosphate</name>
        <dbReference type="ChEBI" id="CHEBI:597326"/>
    </ligand>
</feature>
<feature type="binding site" evidence="1">
    <location>
        <position position="250"/>
    </location>
    <ligand>
        <name>pyridoxal 5'-phosphate</name>
        <dbReference type="ChEBI" id="CHEBI:597326"/>
    </ligand>
</feature>
<feature type="binding site" evidence="1">
    <location>
        <position position="368"/>
    </location>
    <ligand>
        <name>substrate</name>
    </ligand>
</feature>
<feature type="modified residue" description="N6-(pyridoxal phosphate)lysine" evidence="1">
    <location>
        <position position="242"/>
    </location>
</feature>
<gene>
    <name evidence="1" type="primary">dapL</name>
    <name type="ordered locus">Dvul_1431</name>
</gene>
<name>DAPAT_NITV4</name>
<organism>
    <name type="scientific">Nitratidesulfovibrio vulgaris (strain DP4)</name>
    <name type="common">Desulfovibrio vulgaris</name>
    <dbReference type="NCBI Taxonomy" id="391774"/>
    <lineage>
        <taxon>Bacteria</taxon>
        <taxon>Pseudomonadati</taxon>
        <taxon>Thermodesulfobacteriota</taxon>
        <taxon>Desulfovibrionia</taxon>
        <taxon>Desulfovibrionales</taxon>
        <taxon>Desulfovibrionaceae</taxon>
        <taxon>Nitratidesulfovibrio</taxon>
    </lineage>
</organism>
<accession>A1VDD3</accession>
<protein>
    <recommendedName>
        <fullName evidence="1">LL-diaminopimelate aminotransferase</fullName>
        <shortName evidence="1">DAP-AT</shortName>
        <shortName evidence="1">DAP-aminotransferase</shortName>
        <shortName evidence="1">LL-DAP-aminotransferase</shortName>
        <ecNumber evidence="1">2.6.1.83</ecNumber>
    </recommendedName>
</protein>
<keyword id="KW-0032">Aminotransferase</keyword>
<keyword id="KW-0663">Pyridoxal phosphate</keyword>
<keyword id="KW-0808">Transferase</keyword>
<sequence>MAAFKLADRLATLPPYLFAGIDKVKAEVAARGVDIISLGIGDPDMATPGFIIEAMKEAIARPANHQYPSYVGMLAFRQEVANWYDRRFGVSLDPATEVIGLIGSKEGIAHFPFAFINPGDLVLVCTPNYPVYHIATGFAGGEVQFVPLLEENDFLPDLDAIPEDTWKRAKMIFVNYPNNPTAATAPLGFYEKLVDICRRFDVIIAHDTAYTEIYYDEDNRPPSILSVPGAKDVAIEFHSLSKTYNMTGWRVGMAVGNPTLVAGLGKIKENMDSGIFQAVQEASIVALRDGDDFCRELRGIYRQRRDTVITALHKAGIQCRVPQATFYVWARVPQGHTSADFVTRVLQETGVVVTPGNGFGTPGEGFFRISLTVDNARLEEAVSRIAKL</sequence>
<proteinExistence type="inferred from homology"/>